<dbReference type="EC" id="3.4.21.-"/>
<dbReference type="EMBL" id="X71874">
    <property type="protein sequence ID" value="CAA50710.1"/>
    <property type="molecule type" value="Genomic_DNA"/>
</dbReference>
<dbReference type="EMBL" id="X71877">
    <property type="protein sequence ID" value="CAA50711.1"/>
    <property type="molecule type" value="mRNA"/>
</dbReference>
<dbReference type="EMBL" id="BC063475">
    <property type="protein sequence ID" value="AAH63475.1"/>
    <property type="molecule type" value="mRNA"/>
</dbReference>
<dbReference type="CCDS" id="CCDS10852.1"/>
<dbReference type="PIR" id="I38136">
    <property type="entry name" value="I38136"/>
</dbReference>
<dbReference type="RefSeq" id="NP_001898.1">
    <property type="nucleotide sequence ID" value="NM_001907.3"/>
</dbReference>
<dbReference type="SMR" id="P40313"/>
<dbReference type="BioGRID" id="107886">
    <property type="interactions" value="16"/>
</dbReference>
<dbReference type="FunCoup" id="P40313">
    <property type="interactions" value="212"/>
</dbReference>
<dbReference type="IntAct" id="P40313">
    <property type="interactions" value="11"/>
</dbReference>
<dbReference type="MINT" id="P40313"/>
<dbReference type="STRING" id="9606.ENSP00000458537"/>
<dbReference type="BindingDB" id="P40313"/>
<dbReference type="ChEMBL" id="CHEMBL4873"/>
<dbReference type="MEROPS" id="S01.256"/>
<dbReference type="GlyCosmos" id="P40313">
    <property type="glycosylation" value="1 site, No reported glycans"/>
</dbReference>
<dbReference type="GlyGen" id="P40313">
    <property type="glycosylation" value="2 sites"/>
</dbReference>
<dbReference type="iPTMnet" id="P40313"/>
<dbReference type="PhosphoSitePlus" id="P40313"/>
<dbReference type="BioMuta" id="CTRL"/>
<dbReference type="DMDM" id="729224"/>
<dbReference type="jPOST" id="P40313"/>
<dbReference type="MassIVE" id="P40313"/>
<dbReference type="PaxDb" id="9606-ENSP00000458537"/>
<dbReference type="PeptideAtlas" id="P40313"/>
<dbReference type="ProteomicsDB" id="55361"/>
<dbReference type="Antibodypedia" id="15944">
    <property type="antibodies" value="205 antibodies from 29 providers"/>
</dbReference>
<dbReference type="DNASU" id="1506"/>
<dbReference type="Ensembl" id="ENST00000574481.6">
    <property type="protein sequence ID" value="ENSP00000458537.2"/>
    <property type="gene ID" value="ENSG00000141086.18"/>
</dbReference>
<dbReference type="GeneID" id="1506"/>
<dbReference type="KEGG" id="hsa:1506"/>
<dbReference type="MANE-Select" id="ENST00000574481.6">
    <property type="protein sequence ID" value="ENSP00000458537.2"/>
    <property type="RefSeq nucleotide sequence ID" value="NM_001907.3"/>
    <property type="RefSeq protein sequence ID" value="NP_001898.1"/>
</dbReference>
<dbReference type="UCSC" id="uc002euw.4">
    <property type="organism name" value="human"/>
</dbReference>
<dbReference type="AGR" id="HGNC:2524"/>
<dbReference type="CTD" id="1506"/>
<dbReference type="DisGeNET" id="1506"/>
<dbReference type="GeneCards" id="CTRL"/>
<dbReference type="HGNC" id="HGNC:2524">
    <property type="gene designation" value="CTRL"/>
</dbReference>
<dbReference type="HPA" id="ENSG00000141086">
    <property type="expression patterns" value="Tissue enriched (pancreas)"/>
</dbReference>
<dbReference type="MalaCards" id="CTRL"/>
<dbReference type="MIM" id="118888">
    <property type="type" value="gene"/>
</dbReference>
<dbReference type="neXtProt" id="NX_P40313"/>
<dbReference type="PharmGKB" id="PA27025"/>
<dbReference type="VEuPathDB" id="HostDB:ENSG00000141086"/>
<dbReference type="eggNOG" id="KOG3627">
    <property type="taxonomic scope" value="Eukaryota"/>
</dbReference>
<dbReference type="GeneTree" id="ENSGT00940000154494"/>
<dbReference type="HOGENOM" id="CLU_006842_7_6_1"/>
<dbReference type="InParanoid" id="P40313"/>
<dbReference type="OMA" id="TWINQVI"/>
<dbReference type="OrthoDB" id="5918597at2759"/>
<dbReference type="PAN-GO" id="P40313">
    <property type="GO annotations" value="2 GO annotations based on evolutionary models"/>
</dbReference>
<dbReference type="PhylomeDB" id="P40313"/>
<dbReference type="PathwayCommons" id="P40313"/>
<dbReference type="Reactome" id="R-HSA-9925561">
    <property type="pathway name" value="Developmental Lineage of Pancreatic Acinar Cells"/>
</dbReference>
<dbReference type="SignaLink" id="P40313"/>
<dbReference type="BioGRID-ORCS" id="1506">
    <property type="hits" value="14 hits in 1148 CRISPR screens"/>
</dbReference>
<dbReference type="ChiTaRS" id="CTRL">
    <property type="organism name" value="human"/>
</dbReference>
<dbReference type="GeneWiki" id="CTRL_(gene)"/>
<dbReference type="GenomeRNAi" id="1506"/>
<dbReference type="Pharos" id="P40313">
    <property type="development level" value="Tchem"/>
</dbReference>
<dbReference type="PRO" id="PR:P40313"/>
<dbReference type="Proteomes" id="UP000005640">
    <property type="component" value="Chromosome 16"/>
</dbReference>
<dbReference type="RNAct" id="P40313">
    <property type="molecule type" value="protein"/>
</dbReference>
<dbReference type="Bgee" id="ENSG00000141086">
    <property type="expression patterns" value="Expressed in body of pancreas and 97 other cell types or tissues"/>
</dbReference>
<dbReference type="ExpressionAtlas" id="P40313">
    <property type="expression patterns" value="baseline and differential"/>
</dbReference>
<dbReference type="GO" id="GO:0005615">
    <property type="term" value="C:extracellular space"/>
    <property type="evidence" value="ECO:0000314"/>
    <property type="project" value="GO_Central"/>
</dbReference>
<dbReference type="GO" id="GO:0004252">
    <property type="term" value="F:serine-type endopeptidase activity"/>
    <property type="evidence" value="ECO:0000318"/>
    <property type="project" value="GO_Central"/>
</dbReference>
<dbReference type="GO" id="GO:0008236">
    <property type="term" value="F:serine-type peptidase activity"/>
    <property type="evidence" value="ECO:0000314"/>
    <property type="project" value="GO_Central"/>
</dbReference>
<dbReference type="GO" id="GO:0030163">
    <property type="term" value="P:protein catabolic process"/>
    <property type="evidence" value="ECO:0000305"/>
    <property type="project" value="GO_Central"/>
</dbReference>
<dbReference type="GO" id="GO:0006508">
    <property type="term" value="P:proteolysis"/>
    <property type="evidence" value="ECO:0000318"/>
    <property type="project" value="GO_Central"/>
</dbReference>
<dbReference type="CDD" id="cd00190">
    <property type="entry name" value="Tryp_SPc"/>
    <property type="match status" value="1"/>
</dbReference>
<dbReference type="FunFam" id="2.40.10.10:FF:000176">
    <property type="entry name" value="Chymotrypsinogen A"/>
    <property type="match status" value="1"/>
</dbReference>
<dbReference type="FunFam" id="2.40.10.10:FF:000181">
    <property type="entry name" value="Chymotrypsinogen A"/>
    <property type="match status" value="1"/>
</dbReference>
<dbReference type="Gene3D" id="2.40.10.10">
    <property type="entry name" value="Trypsin-like serine proteases"/>
    <property type="match status" value="1"/>
</dbReference>
<dbReference type="InterPro" id="IPR009003">
    <property type="entry name" value="Peptidase_S1_PA"/>
</dbReference>
<dbReference type="InterPro" id="IPR043504">
    <property type="entry name" value="Peptidase_S1_PA_chymotrypsin"/>
</dbReference>
<dbReference type="InterPro" id="IPR001314">
    <property type="entry name" value="Peptidase_S1A"/>
</dbReference>
<dbReference type="InterPro" id="IPR001254">
    <property type="entry name" value="Trypsin_dom"/>
</dbReference>
<dbReference type="InterPro" id="IPR018114">
    <property type="entry name" value="TRYPSIN_HIS"/>
</dbReference>
<dbReference type="InterPro" id="IPR033116">
    <property type="entry name" value="TRYPSIN_SER"/>
</dbReference>
<dbReference type="PANTHER" id="PTHR24250:SF66">
    <property type="entry name" value="CHYMOTRYPSIN-LIKE PROTEASE CTRL-1"/>
    <property type="match status" value="1"/>
</dbReference>
<dbReference type="PANTHER" id="PTHR24250">
    <property type="entry name" value="CHYMOTRYPSIN-RELATED"/>
    <property type="match status" value="1"/>
</dbReference>
<dbReference type="Pfam" id="PF00089">
    <property type="entry name" value="Trypsin"/>
    <property type="match status" value="1"/>
</dbReference>
<dbReference type="PRINTS" id="PR00722">
    <property type="entry name" value="CHYMOTRYPSIN"/>
</dbReference>
<dbReference type="SMART" id="SM00020">
    <property type="entry name" value="Tryp_SPc"/>
    <property type="match status" value="1"/>
</dbReference>
<dbReference type="SUPFAM" id="SSF50494">
    <property type="entry name" value="Trypsin-like serine proteases"/>
    <property type="match status" value="1"/>
</dbReference>
<dbReference type="PROSITE" id="PS50240">
    <property type="entry name" value="TRYPSIN_DOM"/>
    <property type="match status" value="1"/>
</dbReference>
<dbReference type="PROSITE" id="PS00134">
    <property type="entry name" value="TRYPSIN_HIS"/>
    <property type="match status" value="1"/>
</dbReference>
<dbReference type="PROSITE" id="PS00135">
    <property type="entry name" value="TRYPSIN_SER"/>
    <property type="match status" value="1"/>
</dbReference>
<gene>
    <name type="primary">CTRL</name>
    <name type="synonym">CTRL1</name>
</gene>
<accession>P40313</accession>
<sequence length="264" mass="28002">MLLLSLTLSLVLLGSSWGCGIPAIKPALSFSQRIVNGENAVLGSWPWQVSLQDSSGFHFCGGSLISQSWVVTAAHCNVSPGRHFVVLGEYDRSSNAEPLQVLSVSRAITHPSWNSTTMNNDVTLLKLASPAQYTTRISPVCLASSNEALTEGLTCVTTGWGRLSGVGNVTPAHLQQVALPLVTVNQCRQYWGSSITDSMICAGGAGASSCQGDSGGPLVCQKGNTWVLIGIVSWGTKNCNVRAPAVYTRVSKFSTWINQVIAYN</sequence>
<feature type="signal peptide" evidence="2">
    <location>
        <begin position="1"/>
        <end position="18"/>
    </location>
</feature>
<feature type="propeptide" id="PRO_0000027660" description="Activation peptide" evidence="2">
    <location>
        <begin position="19"/>
        <end position="33"/>
    </location>
</feature>
<feature type="chain" id="PRO_0000027661" description="Chymotrypsin-like protease CTRL-1">
    <location>
        <begin position="34"/>
        <end position="264"/>
    </location>
</feature>
<feature type="domain" description="Peptidase S1" evidence="3">
    <location>
        <begin position="34"/>
        <end position="262"/>
    </location>
</feature>
<feature type="active site" description="Charge relay system" evidence="1">
    <location>
        <position position="75"/>
    </location>
</feature>
<feature type="active site" description="Charge relay system" evidence="1">
    <location>
        <position position="121"/>
    </location>
</feature>
<feature type="active site" description="Charge relay system" evidence="1">
    <location>
        <position position="214"/>
    </location>
</feature>
<feature type="glycosylation site" description="N-linked (GlcNAc...) asparagine" evidence="2">
    <location>
        <position position="114"/>
    </location>
</feature>
<feature type="disulfide bond" evidence="3">
    <location>
        <begin position="19"/>
        <end position="141"/>
    </location>
</feature>
<feature type="disulfide bond" evidence="3">
    <location>
        <begin position="60"/>
        <end position="76"/>
    </location>
</feature>
<feature type="disulfide bond" evidence="3">
    <location>
        <begin position="155"/>
        <end position="220"/>
    </location>
</feature>
<feature type="disulfide bond" evidence="3">
    <location>
        <begin position="187"/>
        <end position="201"/>
    </location>
</feature>
<feature type="disulfide bond" evidence="3">
    <location>
        <begin position="210"/>
        <end position="239"/>
    </location>
</feature>
<feature type="sequence variant" id="VAR_051834" description="In dbSNP:rs11552953.">
    <original>T</original>
    <variation>I</variation>
    <location>
        <position position="150"/>
    </location>
</feature>
<feature type="sequence variant" id="VAR_021939" description="In dbSNP:rs1134760.">
    <original>H</original>
    <variation>R</variation>
    <location>
        <position position="173"/>
    </location>
</feature>
<comment type="interaction">
    <interactant intactId="EBI-7883667">
        <id>P40313</id>
    </interactant>
    <interactant intactId="EBI-18400628">
        <id>O00501</id>
        <label>CLDN5</label>
    </interactant>
    <organismsDiffer>false</organismsDiffer>
    <experiments>3</experiments>
</comment>
<comment type="interaction">
    <interactant intactId="EBI-7883667">
        <id>P40313</id>
    </interactant>
    <interactant intactId="EBI-18304435">
        <id>Q5JX71</id>
        <label>FAM209A</label>
    </interactant>
    <organismsDiffer>false</organismsDiffer>
    <experiments>3</experiments>
</comment>
<comment type="interaction">
    <interactant intactId="EBI-7883667">
        <id>P40313</id>
    </interactant>
    <interactant intactId="EBI-743099">
        <id>Q969F0</id>
        <label>FATE1</label>
    </interactant>
    <organismsDiffer>false</organismsDiffer>
    <experiments>3</experiments>
</comment>
<comment type="similarity">
    <text evidence="3">Belongs to the peptidase S1 family.</text>
</comment>
<proteinExistence type="evidence at protein level"/>
<reference key="1">
    <citation type="journal article" date="1993" name="Hum. Mol. Genet.">
        <title>A tight cluster of five unrelated human genes on chromosome 16q22.1.</title>
        <authorList>
            <person name="Larsen F."/>
            <person name="Solheim J."/>
            <person name="Kristensen T."/>
            <person name="Kolstoe A.-B."/>
            <person name="Prydz H."/>
        </authorList>
    </citation>
    <scope>NUCLEOTIDE SEQUENCE [GENOMIC DNA]</scope>
</reference>
<reference key="2">
    <citation type="journal article" date="2004" name="Genome Res.">
        <title>The status, quality, and expansion of the NIH full-length cDNA project: the Mammalian Gene Collection (MGC).</title>
        <authorList>
            <consortium name="The MGC Project Team"/>
        </authorList>
    </citation>
    <scope>NUCLEOTIDE SEQUENCE [LARGE SCALE MRNA]</scope>
    <source>
        <tissue>Pancreas</tissue>
    </source>
</reference>
<protein>
    <recommendedName>
        <fullName>Chymotrypsin-like protease CTRL-1</fullName>
        <ecNumber>3.4.21.-</ecNumber>
    </recommendedName>
</protein>
<name>CTRL_HUMAN</name>
<organism>
    <name type="scientific">Homo sapiens</name>
    <name type="common">Human</name>
    <dbReference type="NCBI Taxonomy" id="9606"/>
    <lineage>
        <taxon>Eukaryota</taxon>
        <taxon>Metazoa</taxon>
        <taxon>Chordata</taxon>
        <taxon>Craniata</taxon>
        <taxon>Vertebrata</taxon>
        <taxon>Euteleostomi</taxon>
        <taxon>Mammalia</taxon>
        <taxon>Eutheria</taxon>
        <taxon>Euarchontoglires</taxon>
        <taxon>Primates</taxon>
        <taxon>Haplorrhini</taxon>
        <taxon>Catarrhini</taxon>
        <taxon>Hominidae</taxon>
        <taxon>Homo</taxon>
    </lineage>
</organism>
<keyword id="KW-1015">Disulfide bond</keyword>
<keyword id="KW-0325">Glycoprotein</keyword>
<keyword id="KW-0378">Hydrolase</keyword>
<keyword id="KW-0645">Protease</keyword>
<keyword id="KW-1267">Proteomics identification</keyword>
<keyword id="KW-1185">Reference proteome</keyword>
<keyword id="KW-0720">Serine protease</keyword>
<keyword id="KW-0732">Signal</keyword>
<keyword id="KW-0865">Zymogen</keyword>
<evidence type="ECO:0000250" key="1"/>
<evidence type="ECO:0000255" key="2"/>
<evidence type="ECO:0000255" key="3">
    <source>
        <dbReference type="PROSITE-ProRule" id="PRU00274"/>
    </source>
</evidence>